<protein>
    <recommendedName>
        <fullName>Methylamine utilization protein MauD</fullName>
    </recommendedName>
</protein>
<proteinExistence type="predicted"/>
<reference key="1">
    <citation type="journal article" date="1997" name="Antonie Van Leeuwenhoek">
        <title>MauE and MauD proteins are essential in methylamine metabolism of Paracoccus denitrificans.</title>
        <authorList>
            <person name="van der Palen C.J.N.M."/>
            <person name="Reijnders W.N.M."/>
            <person name="de Vries S."/>
            <person name="Duine J.A."/>
            <person name="van Spanning R.J.M."/>
        </authorList>
    </citation>
    <scope>NUCLEOTIDE SEQUENCE [GENOMIC DNA]</scope>
    <source>
        <strain>Pd 1222</strain>
    </source>
</reference>
<reference key="2">
    <citation type="journal article" date="1992" name="Biochem. Biophys. Res. Commun.">
        <title>The genetic organization of the mau gene cluster of the facultative autotroph Paracoccus denitrificans.</title>
        <authorList>
            <person name="Chistoserdov A.Y."/>
            <person name="Boyd J."/>
            <person name="Mathews F.S."/>
            <person name="Lidstrom M.E."/>
        </authorList>
    </citation>
    <scope>NUCLEOTIDE SEQUENCE [GENOMIC DNA] OF 178-200</scope>
</reference>
<sequence length="200" mass="21774">MTSFLIASNILLWLAFLGVTVVMLGLMRQVGLLHERSSPMGAMITDHGPDIGDAAPEFELPDFFGRPVRIGGAEAQGRQTLLMFTAPSCPVCDKLFPIIKSIGRAEGINVVMISDGAPEEHRRFLDSHELGEMRYVVSAEAGMAFQVGKIPYGVLLDGQGIIRAKGLTNTREHLESLLEADRTGFASLQQYMASRKKQAA</sequence>
<evidence type="ECO:0000255" key="1"/>
<evidence type="ECO:0000255" key="2">
    <source>
        <dbReference type="PROSITE-ProRule" id="PRU00691"/>
    </source>
</evidence>
<evidence type="ECO:0000305" key="3"/>
<feature type="chain" id="PRO_0000208930" description="Methylamine utilization protein MauD">
    <location>
        <begin position="1"/>
        <end position="200"/>
    </location>
</feature>
<feature type="transmembrane region" description="Helical" evidence="1">
    <location>
        <begin position="4"/>
        <end position="24"/>
    </location>
</feature>
<feature type="domain" description="Thioredoxin" evidence="2">
    <location>
        <begin position="49"/>
        <end position="183"/>
    </location>
</feature>
<comment type="function">
    <text>May be specifically involved in the processing, transport, and/or maturation of the MADH beta-subunit.</text>
</comment>
<comment type="pathway">
    <text>One-carbon metabolism; methylamine degradation.</text>
</comment>
<comment type="subcellular location">
    <subcellularLocation>
        <location evidence="3">Membrane</location>
        <topology evidence="3">Single-pass membrane protein</topology>
    </subcellularLocation>
</comment>
<name>MAUD_PARDE</name>
<dbReference type="EMBL" id="X98581">
    <property type="protein sequence ID" value="CAA67190.1"/>
    <property type="molecule type" value="Genomic_DNA"/>
</dbReference>
<dbReference type="EMBL" id="M90098">
    <property type="protein sequence ID" value="AAA25577.1"/>
    <property type="molecule type" value="Genomic_DNA"/>
</dbReference>
<dbReference type="PIR" id="PH0858">
    <property type="entry name" value="PH0858"/>
</dbReference>
<dbReference type="SMR" id="P29895"/>
<dbReference type="UniPathway" id="UPA00895"/>
<dbReference type="GO" id="GO:0016020">
    <property type="term" value="C:membrane"/>
    <property type="evidence" value="ECO:0007669"/>
    <property type="project" value="UniProtKB-SubCell"/>
</dbReference>
<dbReference type="GO" id="GO:0016209">
    <property type="term" value="F:antioxidant activity"/>
    <property type="evidence" value="ECO:0007669"/>
    <property type="project" value="InterPro"/>
</dbReference>
<dbReference type="GO" id="GO:0016491">
    <property type="term" value="F:oxidoreductase activity"/>
    <property type="evidence" value="ECO:0007669"/>
    <property type="project" value="InterPro"/>
</dbReference>
<dbReference type="GO" id="GO:0030416">
    <property type="term" value="P:methylamine metabolic process"/>
    <property type="evidence" value="ECO:0007669"/>
    <property type="project" value="InterPro"/>
</dbReference>
<dbReference type="Gene3D" id="3.40.30.10">
    <property type="entry name" value="Glutaredoxin"/>
    <property type="match status" value="1"/>
</dbReference>
<dbReference type="InterPro" id="IPR000866">
    <property type="entry name" value="AhpC/TSA"/>
</dbReference>
<dbReference type="InterPro" id="IPR013478">
    <property type="entry name" value="MeN_DH_accessory"/>
</dbReference>
<dbReference type="InterPro" id="IPR036249">
    <property type="entry name" value="Thioredoxin-like_sf"/>
</dbReference>
<dbReference type="InterPro" id="IPR013766">
    <property type="entry name" value="Thioredoxin_domain"/>
</dbReference>
<dbReference type="InterPro" id="IPR050553">
    <property type="entry name" value="Thioredoxin_ResA/DsbE_sf"/>
</dbReference>
<dbReference type="NCBIfam" id="TIGR02661">
    <property type="entry name" value="MauD"/>
    <property type="match status" value="1"/>
</dbReference>
<dbReference type="PANTHER" id="PTHR42852">
    <property type="entry name" value="THIOL:DISULFIDE INTERCHANGE PROTEIN DSBE"/>
    <property type="match status" value="1"/>
</dbReference>
<dbReference type="PANTHER" id="PTHR42852:SF17">
    <property type="entry name" value="THIOREDOXIN-LIKE PROTEIN HI_1115"/>
    <property type="match status" value="1"/>
</dbReference>
<dbReference type="Pfam" id="PF00578">
    <property type="entry name" value="AhpC-TSA"/>
    <property type="match status" value="1"/>
</dbReference>
<dbReference type="SUPFAM" id="SSF52833">
    <property type="entry name" value="Thioredoxin-like"/>
    <property type="match status" value="1"/>
</dbReference>
<dbReference type="PROSITE" id="PS51352">
    <property type="entry name" value="THIOREDOXIN_2"/>
    <property type="match status" value="1"/>
</dbReference>
<accession>P29895</accession>
<keyword id="KW-0472">Membrane</keyword>
<keyword id="KW-0812">Transmembrane</keyword>
<keyword id="KW-1133">Transmembrane helix</keyword>
<gene>
    <name type="primary">mauD</name>
</gene>
<organism>
    <name type="scientific">Paracoccus denitrificans</name>
    <dbReference type="NCBI Taxonomy" id="266"/>
    <lineage>
        <taxon>Bacteria</taxon>
        <taxon>Pseudomonadati</taxon>
        <taxon>Pseudomonadota</taxon>
        <taxon>Alphaproteobacteria</taxon>
        <taxon>Rhodobacterales</taxon>
        <taxon>Paracoccaceae</taxon>
        <taxon>Paracoccus</taxon>
    </lineage>
</organism>